<dbReference type="EMBL" id="CR954199">
    <property type="protein sequence ID" value="CAL36354.1"/>
    <property type="molecule type" value="Genomic_DNA"/>
</dbReference>
<dbReference type="RefSeq" id="YP_717232.1">
    <property type="nucleotide sequence ID" value="NC_008289.1"/>
</dbReference>
<dbReference type="SMR" id="Q0P3M3"/>
<dbReference type="FunCoup" id="Q0P3M3">
    <property type="interactions" value="383"/>
</dbReference>
<dbReference type="STRING" id="70448.Q0P3M3"/>
<dbReference type="GeneID" id="4238842"/>
<dbReference type="KEGG" id="ota:OstapCp29"/>
<dbReference type="eggNOG" id="KOG0832">
    <property type="taxonomic scope" value="Eukaryota"/>
</dbReference>
<dbReference type="InParanoid" id="Q0P3M3"/>
<dbReference type="Proteomes" id="UP000009170">
    <property type="component" value="Chloroplast"/>
</dbReference>
<dbReference type="GO" id="GO:0009507">
    <property type="term" value="C:chloroplast"/>
    <property type="evidence" value="ECO:0007669"/>
    <property type="project" value="UniProtKB-SubCell"/>
</dbReference>
<dbReference type="GO" id="GO:0005763">
    <property type="term" value="C:mitochondrial small ribosomal subunit"/>
    <property type="evidence" value="ECO:0007669"/>
    <property type="project" value="TreeGrafter"/>
</dbReference>
<dbReference type="GO" id="GO:0003735">
    <property type="term" value="F:structural constituent of ribosome"/>
    <property type="evidence" value="ECO:0007669"/>
    <property type="project" value="InterPro"/>
</dbReference>
<dbReference type="GO" id="GO:0006412">
    <property type="term" value="P:translation"/>
    <property type="evidence" value="ECO:0007669"/>
    <property type="project" value="UniProtKB-UniRule"/>
</dbReference>
<dbReference type="CDD" id="cd01425">
    <property type="entry name" value="RPS2"/>
    <property type="match status" value="1"/>
</dbReference>
<dbReference type="Gene3D" id="3.40.50.10490">
    <property type="entry name" value="Glucose-6-phosphate isomerase like protein, domain 1"/>
    <property type="match status" value="1"/>
</dbReference>
<dbReference type="Gene3D" id="1.10.287.610">
    <property type="entry name" value="Helix hairpin bin"/>
    <property type="match status" value="1"/>
</dbReference>
<dbReference type="HAMAP" id="MF_00291_B">
    <property type="entry name" value="Ribosomal_uS2_B"/>
    <property type="match status" value="1"/>
</dbReference>
<dbReference type="InterPro" id="IPR001865">
    <property type="entry name" value="Ribosomal_uS2"/>
</dbReference>
<dbReference type="InterPro" id="IPR005706">
    <property type="entry name" value="Ribosomal_uS2_bac/mit/plastid"/>
</dbReference>
<dbReference type="InterPro" id="IPR018130">
    <property type="entry name" value="Ribosomal_uS2_CS"/>
</dbReference>
<dbReference type="InterPro" id="IPR023591">
    <property type="entry name" value="Ribosomal_uS2_flav_dom_sf"/>
</dbReference>
<dbReference type="NCBIfam" id="TIGR01011">
    <property type="entry name" value="rpsB_bact"/>
    <property type="match status" value="1"/>
</dbReference>
<dbReference type="PANTHER" id="PTHR12534">
    <property type="entry name" value="30S RIBOSOMAL PROTEIN S2 PROKARYOTIC AND ORGANELLAR"/>
    <property type="match status" value="1"/>
</dbReference>
<dbReference type="PANTHER" id="PTHR12534:SF0">
    <property type="entry name" value="SMALL RIBOSOMAL SUBUNIT PROTEIN US2M"/>
    <property type="match status" value="1"/>
</dbReference>
<dbReference type="Pfam" id="PF00318">
    <property type="entry name" value="Ribosomal_S2"/>
    <property type="match status" value="1"/>
</dbReference>
<dbReference type="PRINTS" id="PR00395">
    <property type="entry name" value="RIBOSOMALS2"/>
</dbReference>
<dbReference type="SUPFAM" id="SSF52313">
    <property type="entry name" value="Ribosomal protein S2"/>
    <property type="match status" value="1"/>
</dbReference>
<dbReference type="PROSITE" id="PS00962">
    <property type="entry name" value="RIBOSOMAL_S2_1"/>
    <property type="match status" value="1"/>
</dbReference>
<dbReference type="PROSITE" id="PS00963">
    <property type="entry name" value="RIBOSOMAL_S2_2"/>
    <property type="match status" value="1"/>
</dbReference>
<sequence>MFIKFEKVKKLLNMLQSMLEAGVHFGHQSRRWNPKMAPYIYEEKNGIHILDVVQTIGELEKARTAFKSAKNVIFVGTRPAIAPLIEQVATKTGSNYVNTRWVGGLLTNWTTMTMCLEKLGRLDAQLETATPKKGFTKKDILSLTRERERLEKFFGGLRNLKTLPDLVVIVGQPNERNAVLECQKLNIPTITLLDSNCDPTFVSYGIPANDDSARSVAFILDQLTKD</sequence>
<comment type="subcellular location">
    <subcellularLocation>
        <location>Plastid</location>
        <location>Chloroplast</location>
    </subcellularLocation>
</comment>
<comment type="similarity">
    <text evidence="1">Belongs to the universal ribosomal protein uS2 family.</text>
</comment>
<reference key="1">
    <citation type="journal article" date="2007" name="Mol. Biol. Evol.">
        <title>The complete chloroplast and mitochondrial DNA sequence of Ostreococcus tauri: organelle genomes of the smallest eukaryote are examples of compaction.</title>
        <authorList>
            <person name="Robbens S."/>
            <person name="Derelle E."/>
            <person name="Ferraz C."/>
            <person name="Wuyts J."/>
            <person name="Moreau H."/>
            <person name="Van de Peer Y."/>
        </authorList>
    </citation>
    <scope>NUCLEOTIDE SEQUENCE [LARGE SCALE GENOMIC DNA]</scope>
    <source>
        <strain>OTTH0595</strain>
    </source>
</reference>
<accession>Q0P3M3</accession>
<gene>
    <name type="primary">rps2</name>
    <name type="ordered locus">OtCpg00290</name>
</gene>
<organism>
    <name type="scientific">Ostreococcus tauri</name>
    <dbReference type="NCBI Taxonomy" id="70448"/>
    <lineage>
        <taxon>Eukaryota</taxon>
        <taxon>Viridiplantae</taxon>
        <taxon>Chlorophyta</taxon>
        <taxon>Mamiellophyceae</taxon>
        <taxon>Mamiellales</taxon>
        <taxon>Bathycoccaceae</taxon>
        <taxon>Ostreococcus</taxon>
    </lineage>
</organism>
<proteinExistence type="inferred from homology"/>
<evidence type="ECO:0000305" key="1"/>
<protein>
    <recommendedName>
        <fullName evidence="1">Small ribosomal subunit protein uS2c</fullName>
    </recommendedName>
    <alternativeName>
        <fullName>30S ribosomal protein S2, chloroplastic</fullName>
    </alternativeName>
</protein>
<keyword id="KW-0150">Chloroplast</keyword>
<keyword id="KW-0934">Plastid</keyword>
<keyword id="KW-1185">Reference proteome</keyword>
<keyword id="KW-0687">Ribonucleoprotein</keyword>
<keyword id="KW-0689">Ribosomal protein</keyword>
<name>RR2_OSTTA</name>
<geneLocation type="chloroplast"/>
<feature type="chain" id="PRO_0000352144" description="Small ribosomal subunit protein uS2c">
    <location>
        <begin position="1"/>
        <end position="226"/>
    </location>
</feature>